<dbReference type="EMBL" id="CP000240">
    <property type="protein sequence ID" value="ABD02197.1"/>
    <property type="molecule type" value="Genomic_DNA"/>
</dbReference>
<dbReference type="RefSeq" id="WP_011432850.1">
    <property type="nucleotide sequence ID" value="NC_007776.1"/>
</dbReference>
<dbReference type="SMR" id="Q2JM50"/>
<dbReference type="STRING" id="321332.CYB_1222"/>
<dbReference type="KEGG" id="cyb:CYB_1222"/>
<dbReference type="eggNOG" id="COG0081">
    <property type="taxonomic scope" value="Bacteria"/>
</dbReference>
<dbReference type="HOGENOM" id="CLU_062853_0_0_3"/>
<dbReference type="OrthoDB" id="9803740at2"/>
<dbReference type="Proteomes" id="UP000001938">
    <property type="component" value="Chromosome"/>
</dbReference>
<dbReference type="GO" id="GO:0015934">
    <property type="term" value="C:large ribosomal subunit"/>
    <property type="evidence" value="ECO:0007669"/>
    <property type="project" value="InterPro"/>
</dbReference>
<dbReference type="GO" id="GO:0019843">
    <property type="term" value="F:rRNA binding"/>
    <property type="evidence" value="ECO:0007669"/>
    <property type="project" value="UniProtKB-UniRule"/>
</dbReference>
<dbReference type="GO" id="GO:0003735">
    <property type="term" value="F:structural constituent of ribosome"/>
    <property type="evidence" value="ECO:0007669"/>
    <property type="project" value="InterPro"/>
</dbReference>
<dbReference type="GO" id="GO:0000049">
    <property type="term" value="F:tRNA binding"/>
    <property type="evidence" value="ECO:0007669"/>
    <property type="project" value="UniProtKB-KW"/>
</dbReference>
<dbReference type="GO" id="GO:0006417">
    <property type="term" value="P:regulation of translation"/>
    <property type="evidence" value="ECO:0007669"/>
    <property type="project" value="UniProtKB-KW"/>
</dbReference>
<dbReference type="GO" id="GO:0006412">
    <property type="term" value="P:translation"/>
    <property type="evidence" value="ECO:0007669"/>
    <property type="project" value="UniProtKB-UniRule"/>
</dbReference>
<dbReference type="CDD" id="cd00403">
    <property type="entry name" value="Ribosomal_L1"/>
    <property type="match status" value="1"/>
</dbReference>
<dbReference type="FunFam" id="3.40.50.790:FF:000001">
    <property type="entry name" value="50S ribosomal protein L1"/>
    <property type="match status" value="1"/>
</dbReference>
<dbReference type="Gene3D" id="3.30.190.20">
    <property type="match status" value="1"/>
</dbReference>
<dbReference type="Gene3D" id="3.40.50.790">
    <property type="match status" value="1"/>
</dbReference>
<dbReference type="HAMAP" id="MF_01318_B">
    <property type="entry name" value="Ribosomal_uL1_B"/>
    <property type="match status" value="1"/>
</dbReference>
<dbReference type="InterPro" id="IPR005878">
    <property type="entry name" value="Ribosom_uL1_bac-type"/>
</dbReference>
<dbReference type="InterPro" id="IPR002143">
    <property type="entry name" value="Ribosomal_uL1"/>
</dbReference>
<dbReference type="InterPro" id="IPR023674">
    <property type="entry name" value="Ribosomal_uL1-like"/>
</dbReference>
<dbReference type="InterPro" id="IPR028364">
    <property type="entry name" value="Ribosomal_uL1/biogenesis"/>
</dbReference>
<dbReference type="InterPro" id="IPR016095">
    <property type="entry name" value="Ribosomal_uL1_3-a/b-sand"/>
</dbReference>
<dbReference type="InterPro" id="IPR023673">
    <property type="entry name" value="Ribosomal_uL1_CS"/>
</dbReference>
<dbReference type="NCBIfam" id="TIGR01169">
    <property type="entry name" value="rplA_bact"/>
    <property type="match status" value="1"/>
</dbReference>
<dbReference type="PANTHER" id="PTHR36427">
    <property type="entry name" value="54S RIBOSOMAL PROTEIN L1, MITOCHONDRIAL"/>
    <property type="match status" value="1"/>
</dbReference>
<dbReference type="PANTHER" id="PTHR36427:SF3">
    <property type="entry name" value="LARGE RIBOSOMAL SUBUNIT PROTEIN UL1M"/>
    <property type="match status" value="1"/>
</dbReference>
<dbReference type="Pfam" id="PF00687">
    <property type="entry name" value="Ribosomal_L1"/>
    <property type="match status" value="1"/>
</dbReference>
<dbReference type="PIRSF" id="PIRSF002155">
    <property type="entry name" value="Ribosomal_L1"/>
    <property type="match status" value="1"/>
</dbReference>
<dbReference type="SUPFAM" id="SSF56808">
    <property type="entry name" value="Ribosomal protein L1"/>
    <property type="match status" value="1"/>
</dbReference>
<dbReference type="PROSITE" id="PS01199">
    <property type="entry name" value="RIBOSOMAL_L1"/>
    <property type="match status" value="1"/>
</dbReference>
<organism>
    <name type="scientific">Synechococcus sp. (strain JA-2-3B'a(2-13))</name>
    <name type="common">Cyanobacteria bacterium Yellowstone B-Prime</name>
    <dbReference type="NCBI Taxonomy" id="321332"/>
    <lineage>
        <taxon>Bacteria</taxon>
        <taxon>Bacillati</taxon>
        <taxon>Cyanobacteriota</taxon>
        <taxon>Cyanophyceae</taxon>
        <taxon>Synechococcales</taxon>
        <taxon>Synechococcaceae</taxon>
        <taxon>Synechococcus</taxon>
    </lineage>
</organism>
<proteinExistence type="inferred from homology"/>
<reference key="1">
    <citation type="journal article" date="2007" name="ISME J.">
        <title>Population level functional diversity in a microbial community revealed by comparative genomic and metagenomic analyses.</title>
        <authorList>
            <person name="Bhaya D."/>
            <person name="Grossman A.R."/>
            <person name="Steunou A.-S."/>
            <person name="Khuri N."/>
            <person name="Cohan F.M."/>
            <person name="Hamamura N."/>
            <person name="Melendrez M.C."/>
            <person name="Bateson M.M."/>
            <person name="Ward D.M."/>
            <person name="Heidelberg J.F."/>
        </authorList>
    </citation>
    <scope>NUCLEOTIDE SEQUENCE [LARGE SCALE GENOMIC DNA]</scope>
    <source>
        <strain>JA-2-3B'a(2-13)</strain>
    </source>
</reference>
<feature type="chain" id="PRO_0000308127" description="Large ribosomal subunit protein uL1">
    <location>
        <begin position="1"/>
        <end position="236"/>
    </location>
</feature>
<keyword id="KW-1185">Reference proteome</keyword>
<keyword id="KW-0678">Repressor</keyword>
<keyword id="KW-0687">Ribonucleoprotein</keyword>
<keyword id="KW-0689">Ribosomal protein</keyword>
<keyword id="KW-0694">RNA-binding</keyword>
<keyword id="KW-0699">rRNA-binding</keyword>
<keyword id="KW-0810">Translation regulation</keyword>
<keyword id="KW-0820">tRNA-binding</keyword>
<sequence>MARKLSKRMQALREKVKPIAYAPEAALALMKETATAKFEEAAEVHIRLGIDPKYADQQLRTTVVLPRGTGQEIRVAVIARGEKVVEAQNAGADRVGYEDLIEEISKGMMDFDLLIATPDVMPQVAKLGRLLGPRGLMPSPKGGTVTMDLAQAIKEFKAGKLEYRADRTGIVHLIFGKCKFPVEALLENLKAVQESIDRNRPSGAKGKYWRTLHVSATMGPSIEVDINALRELKLAT</sequence>
<accession>Q2JM50</accession>
<comment type="function">
    <text evidence="1">Binds directly to 23S rRNA. The L1 stalk is quite mobile in the ribosome, and is involved in E site tRNA release.</text>
</comment>
<comment type="function">
    <text evidence="1">Protein L1 is also a translational repressor protein, it controls the translation of the L11 operon by binding to its mRNA.</text>
</comment>
<comment type="subunit">
    <text evidence="1">Part of the 50S ribosomal subunit.</text>
</comment>
<comment type="similarity">
    <text evidence="1">Belongs to the universal ribosomal protein uL1 family.</text>
</comment>
<gene>
    <name evidence="1" type="primary">rplA</name>
    <name evidence="1" type="synonym">rpl1</name>
    <name type="ordered locus">CYB_1222</name>
</gene>
<name>RL1_SYNJB</name>
<evidence type="ECO:0000255" key="1">
    <source>
        <dbReference type="HAMAP-Rule" id="MF_01318"/>
    </source>
</evidence>
<evidence type="ECO:0000305" key="2"/>
<protein>
    <recommendedName>
        <fullName evidence="1">Large ribosomal subunit protein uL1</fullName>
    </recommendedName>
    <alternativeName>
        <fullName evidence="2">50S ribosomal protein L1</fullName>
    </alternativeName>
</protein>